<accession>A5WGE7</accession>
<keyword id="KW-0414">Isoprene biosynthesis</keyword>
<keyword id="KW-0464">Manganese</keyword>
<keyword id="KW-0479">Metal-binding</keyword>
<keyword id="KW-0521">NADP</keyword>
<keyword id="KW-0560">Oxidoreductase</keyword>
<evidence type="ECO:0000255" key="1">
    <source>
        <dbReference type="HAMAP-Rule" id="MF_00183"/>
    </source>
</evidence>
<feature type="chain" id="PRO_1000071668" description="1-deoxy-D-xylulose 5-phosphate reductoisomerase">
    <location>
        <begin position="1"/>
        <end position="411"/>
    </location>
</feature>
<feature type="binding site" evidence="1">
    <location>
        <position position="11"/>
    </location>
    <ligand>
        <name>NADPH</name>
        <dbReference type="ChEBI" id="CHEBI:57783"/>
    </ligand>
</feature>
<feature type="binding site" evidence="1">
    <location>
        <position position="12"/>
    </location>
    <ligand>
        <name>NADPH</name>
        <dbReference type="ChEBI" id="CHEBI:57783"/>
    </ligand>
</feature>
<feature type="binding site" evidence="1">
    <location>
        <position position="13"/>
    </location>
    <ligand>
        <name>NADPH</name>
        <dbReference type="ChEBI" id="CHEBI:57783"/>
    </ligand>
</feature>
<feature type="binding site" evidence="1">
    <location>
        <position position="14"/>
    </location>
    <ligand>
        <name>NADPH</name>
        <dbReference type="ChEBI" id="CHEBI:57783"/>
    </ligand>
</feature>
<feature type="binding site" evidence="1">
    <location>
        <position position="124"/>
    </location>
    <ligand>
        <name>NADPH</name>
        <dbReference type="ChEBI" id="CHEBI:57783"/>
    </ligand>
</feature>
<feature type="binding site" evidence="1">
    <location>
        <position position="125"/>
    </location>
    <ligand>
        <name>1-deoxy-D-xylulose 5-phosphate</name>
        <dbReference type="ChEBI" id="CHEBI:57792"/>
    </ligand>
</feature>
<feature type="binding site" evidence="1">
    <location>
        <position position="126"/>
    </location>
    <ligand>
        <name>NADPH</name>
        <dbReference type="ChEBI" id="CHEBI:57783"/>
    </ligand>
</feature>
<feature type="binding site" evidence="1">
    <location>
        <position position="150"/>
    </location>
    <ligand>
        <name>Mn(2+)</name>
        <dbReference type="ChEBI" id="CHEBI:29035"/>
    </ligand>
</feature>
<feature type="binding site" evidence="1">
    <location>
        <position position="151"/>
    </location>
    <ligand>
        <name>1-deoxy-D-xylulose 5-phosphate</name>
        <dbReference type="ChEBI" id="CHEBI:57792"/>
    </ligand>
</feature>
<feature type="binding site" evidence="1">
    <location>
        <position position="152"/>
    </location>
    <ligand>
        <name>1-deoxy-D-xylulose 5-phosphate</name>
        <dbReference type="ChEBI" id="CHEBI:57792"/>
    </ligand>
</feature>
<feature type="binding site" evidence="1">
    <location>
        <position position="152"/>
    </location>
    <ligand>
        <name>Mn(2+)</name>
        <dbReference type="ChEBI" id="CHEBI:29035"/>
    </ligand>
</feature>
<feature type="binding site" evidence="1">
    <location>
        <position position="186"/>
    </location>
    <ligand>
        <name>1-deoxy-D-xylulose 5-phosphate</name>
        <dbReference type="ChEBI" id="CHEBI:57792"/>
    </ligand>
</feature>
<feature type="binding site" evidence="1">
    <location>
        <position position="209"/>
    </location>
    <ligand>
        <name>1-deoxy-D-xylulose 5-phosphate</name>
        <dbReference type="ChEBI" id="CHEBI:57792"/>
    </ligand>
</feature>
<feature type="binding site" evidence="1">
    <location>
        <position position="215"/>
    </location>
    <ligand>
        <name>NADPH</name>
        <dbReference type="ChEBI" id="CHEBI:57783"/>
    </ligand>
</feature>
<feature type="binding site" evidence="1">
    <location>
        <position position="222"/>
    </location>
    <ligand>
        <name>1-deoxy-D-xylulose 5-phosphate</name>
        <dbReference type="ChEBI" id="CHEBI:57792"/>
    </ligand>
</feature>
<feature type="binding site" evidence="1">
    <location>
        <position position="227"/>
    </location>
    <ligand>
        <name>1-deoxy-D-xylulose 5-phosphate</name>
        <dbReference type="ChEBI" id="CHEBI:57792"/>
    </ligand>
</feature>
<feature type="binding site" evidence="1">
    <location>
        <position position="228"/>
    </location>
    <ligand>
        <name>1-deoxy-D-xylulose 5-phosphate</name>
        <dbReference type="ChEBI" id="CHEBI:57792"/>
    </ligand>
</feature>
<feature type="binding site" evidence="1">
    <location>
        <position position="231"/>
    </location>
    <ligand>
        <name>1-deoxy-D-xylulose 5-phosphate</name>
        <dbReference type="ChEBI" id="CHEBI:57792"/>
    </ligand>
</feature>
<feature type="binding site" evidence="1">
    <location>
        <position position="231"/>
    </location>
    <ligand>
        <name>Mn(2+)</name>
        <dbReference type="ChEBI" id="CHEBI:29035"/>
    </ligand>
</feature>
<sequence>MTQRIAVLGATGSIGDSTLSILAAHPEHYQVYALSGHGRLDKLFELCQQFRPSRVAVPENKVDDFATRLAAAQIACEVVGGQAGLDDIALDPQVDTVVAAIVGAAGLASTLSAAKAGKRVLLANKEALVMAGSLMMQAVRDNGATLLPLDSEHNAIFQCLPPQIQQNNTAIHDASHGVKKLWLTASGGPFLNKTWEQMQAASVSEAVKHPNWSMGQKISVDSATMMNKGLELIEACHLFDLAESQINVVIHPQSIIHSLVEYCDGSFLAQMGSPDMRTPIAHALAYPNRISAGVESLDLYQLSSLEFIKPDLKKFACLKLAREAMQSGQAASITLNAANEVAVEAFIKQQVSLTDIALINAQVLDKMLGKDKSVAGHAAISVRQITELNDILMIDKIAREQAQLEVMACRN</sequence>
<reference key="1">
    <citation type="submission" date="2007-05" db="EMBL/GenBank/DDBJ databases">
        <title>Complete sequence of chromosome of Psychrobacter sp. PRwf-1.</title>
        <authorList>
            <consortium name="US DOE Joint Genome Institute"/>
            <person name="Copeland A."/>
            <person name="Lucas S."/>
            <person name="Lapidus A."/>
            <person name="Barry K."/>
            <person name="Detter J.C."/>
            <person name="Glavina del Rio T."/>
            <person name="Hammon N."/>
            <person name="Israni S."/>
            <person name="Dalin E."/>
            <person name="Tice H."/>
            <person name="Pitluck S."/>
            <person name="Chain P."/>
            <person name="Malfatti S."/>
            <person name="Shin M."/>
            <person name="Vergez L."/>
            <person name="Schmutz J."/>
            <person name="Larimer F."/>
            <person name="Land M."/>
            <person name="Hauser L."/>
            <person name="Kyrpides N."/>
            <person name="Kim E."/>
            <person name="Tiedje J."/>
            <person name="Richardson P."/>
        </authorList>
    </citation>
    <scope>NUCLEOTIDE SEQUENCE [LARGE SCALE GENOMIC DNA]</scope>
    <source>
        <strain>PRwf-1</strain>
    </source>
</reference>
<organism>
    <name type="scientific">Psychrobacter sp. (strain PRwf-1)</name>
    <dbReference type="NCBI Taxonomy" id="349106"/>
    <lineage>
        <taxon>Bacteria</taxon>
        <taxon>Pseudomonadati</taxon>
        <taxon>Pseudomonadota</taxon>
        <taxon>Gammaproteobacteria</taxon>
        <taxon>Moraxellales</taxon>
        <taxon>Moraxellaceae</taxon>
        <taxon>Psychrobacter</taxon>
    </lineage>
</organism>
<protein>
    <recommendedName>
        <fullName evidence="1">1-deoxy-D-xylulose 5-phosphate reductoisomerase</fullName>
        <shortName evidence="1">DXP reductoisomerase</shortName>
        <ecNumber evidence="1">1.1.1.267</ecNumber>
    </recommendedName>
    <alternativeName>
        <fullName evidence="1">1-deoxyxylulose-5-phosphate reductoisomerase</fullName>
    </alternativeName>
    <alternativeName>
        <fullName evidence="1">2-C-methyl-D-erythritol 4-phosphate synthase</fullName>
    </alternativeName>
</protein>
<gene>
    <name evidence="1" type="primary">dxr</name>
    <name type="ordered locus">PsycPRwf_1798</name>
</gene>
<name>DXR_PSYWF</name>
<dbReference type="EC" id="1.1.1.267" evidence="1"/>
<dbReference type="EMBL" id="CP000713">
    <property type="protein sequence ID" value="ABQ94738.1"/>
    <property type="molecule type" value="Genomic_DNA"/>
</dbReference>
<dbReference type="SMR" id="A5WGE7"/>
<dbReference type="STRING" id="349106.PsycPRwf_1798"/>
<dbReference type="KEGG" id="prw:PsycPRwf_1798"/>
<dbReference type="eggNOG" id="COG0743">
    <property type="taxonomic scope" value="Bacteria"/>
</dbReference>
<dbReference type="HOGENOM" id="CLU_035714_4_0_6"/>
<dbReference type="UniPathway" id="UPA00056">
    <property type="reaction ID" value="UER00092"/>
</dbReference>
<dbReference type="GO" id="GO:0030604">
    <property type="term" value="F:1-deoxy-D-xylulose-5-phosphate reductoisomerase activity"/>
    <property type="evidence" value="ECO:0007669"/>
    <property type="project" value="UniProtKB-UniRule"/>
</dbReference>
<dbReference type="GO" id="GO:0030145">
    <property type="term" value="F:manganese ion binding"/>
    <property type="evidence" value="ECO:0007669"/>
    <property type="project" value="TreeGrafter"/>
</dbReference>
<dbReference type="GO" id="GO:0070402">
    <property type="term" value="F:NADPH binding"/>
    <property type="evidence" value="ECO:0007669"/>
    <property type="project" value="InterPro"/>
</dbReference>
<dbReference type="GO" id="GO:0051484">
    <property type="term" value="P:isopentenyl diphosphate biosynthetic process, methylerythritol 4-phosphate pathway involved in terpenoid biosynthetic process"/>
    <property type="evidence" value="ECO:0007669"/>
    <property type="project" value="TreeGrafter"/>
</dbReference>
<dbReference type="FunFam" id="3.40.50.720:FF:000045">
    <property type="entry name" value="1-deoxy-D-xylulose 5-phosphate reductoisomerase"/>
    <property type="match status" value="1"/>
</dbReference>
<dbReference type="Gene3D" id="1.10.1740.10">
    <property type="match status" value="1"/>
</dbReference>
<dbReference type="Gene3D" id="3.40.50.720">
    <property type="entry name" value="NAD(P)-binding Rossmann-like Domain"/>
    <property type="match status" value="1"/>
</dbReference>
<dbReference type="HAMAP" id="MF_00183">
    <property type="entry name" value="DXP_reductoisom"/>
    <property type="match status" value="1"/>
</dbReference>
<dbReference type="InterPro" id="IPR003821">
    <property type="entry name" value="DXP_reductoisomerase"/>
</dbReference>
<dbReference type="InterPro" id="IPR013644">
    <property type="entry name" value="DXP_reductoisomerase_C"/>
</dbReference>
<dbReference type="InterPro" id="IPR013512">
    <property type="entry name" value="DXP_reductoisomerase_N"/>
</dbReference>
<dbReference type="InterPro" id="IPR026877">
    <property type="entry name" value="DXPR_C"/>
</dbReference>
<dbReference type="InterPro" id="IPR036169">
    <property type="entry name" value="DXPR_C_sf"/>
</dbReference>
<dbReference type="InterPro" id="IPR036291">
    <property type="entry name" value="NAD(P)-bd_dom_sf"/>
</dbReference>
<dbReference type="NCBIfam" id="TIGR00243">
    <property type="entry name" value="Dxr"/>
    <property type="match status" value="1"/>
</dbReference>
<dbReference type="NCBIfam" id="NF003938">
    <property type="entry name" value="PRK05447.1-1"/>
    <property type="match status" value="1"/>
</dbReference>
<dbReference type="PANTHER" id="PTHR30525">
    <property type="entry name" value="1-DEOXY-D-XYLULOSE 5-PHOSPHATE REDUCTOISOMERASE"/>
    <property type="match status" value="1"/>
</dbReference>
<dbReference type="PANTHER" id="PTHR30525:SF0">
    <property type="entry name" value="1-DEOXY-D-XYLULOSE 5-PHOSPHATE REDUCTOISOMERASE, CHLOROPLASTIC"/>
    <property type="match status" value="1"/>
</dbReference>
<dbReference type="Pfam" id="PF08436">
    <property type="entry name" value="DXP_redisom_C"/>
    <property type="match status" value="1"/>
</dbReference>
<dbReference type="Pfam" id="PF02670">
    <property type="entry name" value="DXP_reductoisom"/>
    <property type="match status" value="1"/>
</dbReference>
<dbReference type="Pfam" id="PF13288">
    <property type="entry name" value="DXPR_C"/>
    <property type="match status" value="1"/>
</dbReference>
<dbReference type="PIRSF" id="PIRSF006205">
    <property type="entry name" value="Dxp_reductismrs"/>
    <property type="match status" value="1"/>
</dbReference>
<dbReference type="SUPFAM" id="SSF69055">
    <property type="entry name" value="1-deoxy-D-xylulose-5-phosphate reductoisomerase, C-terminal domain"/>
    <property type="match status" value="1"/>
</dbReference>
<dbReference type="SUPFAM" id="SSF55347">
    <property type="entry name" value="Glyceraldehyde-3-phosphate dehydrogenase-like, C-terminal domain"/>
    <property type="match status" value="1"/>
</dbReference>
<dbReference type="SUPFAM" id="SSF51735">
    <property type="entry name" value="NAD(P)-binding Rossmann-fold domains"/>
    <property type="match status" value="1"/>
</dbReference>
<proteinExistence type="inferred from homology"/>
<comment type="function">
    <text evidence="1">Catalyzes the NADPH-dependent rearrangement and reduction of 1-deoxy-D-xylulose-5-phosphate (DXP) to 2-C-methyl-D-erythritol 4-phosphate (MEP).</text>
</comment>
<comment type="catalytic activity">
    <reaction evidence="1">
        <text>2-C-methyl-D-erythritol 4-phosphate + NADP(+) = 1-deoxy-D-xylulose 5-phosphate + NADPH + H(+)</text>
        <dbReference type="Rhea" id="RHEA:13717"/>
        <dbReference type="ChEBI" id="CHEBI:15378"/>
        <dbReference type="ChEBI" id="CHEBI:57783"/>
        <dbReference type="ChEBI" id="CHEBI:57792"/>
        <dbReference type="ChEBI" id="CHEBI:58262"/>
        <dbReference type="ChEBI" id="CHEBI:58349"/>
        <dbReference type="EC" id="1.1.1.267"/>
    </reaction>
    <physiologicalReaction direction="right-to-left" evidence="1">
        <dbReference type="Rhea" id="RHEA:13719"/>
    </physiologicalReaction>
</comment>
<comment type="cofactor">
    <cofactor evidence="1">
        <name>Mg(2+)</name>
        <dbReference type="ChEBI" id="CHEBI:18420"/>
    </cofactor>
    <cofactor evidence="1">
        <name>Mn(2+)</name>
        <dbReference type="ChEBI" id="CHEBI:29035"/>
    </cofactor>
</comment>
<comment type="pathway">
    <text evidence="1">Isoprenoid biosynthesis; isopentenyl diphosphate biosynthesis via DXP pathway; isopentenyl diphosphate from 1-deoxy-D-xylulose 5-phosphate: step 1/6.</text>
</comment>
<comment type="similarity">
    <text evidence="1">Belongs to the DXR family.</text>
</comment>